<keyword id="KW-0010">Activator</keyword>
<keyword id="KW-0067">ATP-binding</keyword>
<keyword id="KW-0119">Carbohydrate metabolism</keyword>
<keyword id="KW-0238">DNA-binding</keyword>
<keyword id="KW-0547">Nucleotide-binding</keyword>
<keyword id="KW-0804">Transcription</keyword>
<keyword id="KW-0805">Transcription regulation</keyword>
<evidence type="ECO:0000255" key="1">
    <source>
        <dbReference type="HAMAP-Rule" id="MF_01247"/>
    </source>
</evidence>
<name>MALT_SHIBS</name>
<sequence>MLIPSKLSRPVRLDHTVVRERLLAKLSGANNFRLALITSPAGYGKTTLISQWAAGKNDIGWYSLDEGDNQQERFASYLIATVQQATNGHCAICETMAQKRQYASLTSLFAQLFIELAEWHSPLYLVIDDYHLITNPVIHESMRFFIRHQPENLTLVVLSRNLPQLGIANLRVRDQLLEIGSQQLAFTHQEAKQFFDCRLSSPIEAAESSRICDDVSGWATALQLIALSARQNTHSAHKSARRLAGINASHLSDYLVDEVLDNVDLATRHFLLKSAILRSMNDALITRVTGEENGQMRLEEIERQGLFLQRMDDTGEWFCYHPLFGNFLRQRCQWELAAELPEIHRAAAESWMAQGFPSEAIHHALAAGDALMLRDILLNHAWSLFNHSELSLLEESLKALPWDSLLENPQLVLLQAWLMQSQHRYGEVNTLLARAEHEIKDIREGTMHAEFNALRAQVAINDGNPDEAERLAKLALEELPPGWFYSRIVATSVLGEVLHCKGELTRSLALMQQTEQMARQHDVWHYALWSLIQQSEILFAQGFLQTAWETQEKAFQLINEQHLEQLPMHEFLVRIRAQLLWAWARLDEAEASARSGIEVLSSYQPQQQLQCLAMLIQCSLARGDLDNARSQLNRLENLLGNGKYHSDWISNANKVRVIYWQMTGDKAAAANWLRHTAKPEFANNHFLQGQWRNIARAQILLGEFEPAEIVLEELNENARSLRLMSDLNRNLLLLNQLYWQAGRKSDAQRVLLDALKLANRTGFISHFVIEGEAMAQQLRQLIQLNTLPELEQHRAQRILREINQHHRHKFAHFDENFVERLLNHPEVPELIRTSPLTQREWQVLGLIYSGYSNEQIAGELEVAATTIKTHIRNLYQKLGVAHRQAAVQHAQKLLKMMGYGV</sequence>
<comment type="function">
    <text evidence="1">Positively regulates the transcription of the maltose regulon whose gene products are responsible for uptake and catabolism of malto-oligosaccharides. Specifically binds to the promoter region of its target genes, recognizing a short DNA motif called the MalT box.</text>
</comment>
<comment type="activity regulation">
    <text evidence="1">Activated by ATP and maltotriose, which are both required for DNA binding.</text>
</comment>
<comment type="subunit">
    <text evidence="1">Monomer in solution. Oligomerizes to an active state in the presence of the positive effectors ATP and maltotriose.</text>
</comment>
<comment type="similarity">
    <text evidence="1">Belongs to the MalT family.</text>
</comment>
<proteinExistence type="inferred from homology"/>
<accession>Q31VL4</accession>
<reference key="1">
    <citation type="journal article" date="2005" name="Nucleic Acids Res.">
        <title>Genome dynamics and diversity of Shigella species, the etiologic agents of bacillary dysentery.</title>
        <authorList>
            <person name="Yang F."/>
            <person name="Yang J."/>
            <person name="Zhang X."/>
            <person name="Chen L."/>
            <person name="Jiang Y."/>
            <person name="Yan Y."/>
            <person name="Tang X."/>
            <person name="Wang J."/>
            <person name="Xiong Z."/>
            <person name="Dong J."/>
            <person name="Xue Y."/>
            <person name="Zhu Y."/>
            <person name="Xu X."/>
            <person name="Sun L."/>
            <person name="Chen S."/>
            <person name="Nie H."/>
            <person name="Peng J."/>
            <person name="Xu J."/>
            <person name="Wang Y."/>
            <person name="Yuan Z."/>
            <person name="Wen Y."/>
            <person name="Yao Z."/>
            <person name="Shen Y."/>
            <person name="Qiang B."/>
            <person name="Hou Y."/>
            <person name="Yu J."/>
            <person name="Jin Q."/>
        </authorList>
    </citation>
    <scope>NUCLEOTIDE SEQUENCE [LARGE SCALE GENOMIC DNA]</scope>
    <source>
        <strain>Sb227</strain>
    </source>
</reference>
<dbReference type="EMBL" id="CP000036">
    <property type="protein sequence ID" value="ABB67894.1"/>
    <property type="molecule type" value="Genomic_DNA"/>
</dbReference>
<dbReference type="RefSeq" id="WP_000907010.1">
    <property type="nucleotide sequence ID" value="NC_007613.1"/>
</dbReference>
<dbReference type="SMR" id="Q31VL4"/>
<dbReference type="KEGG" id="sbo:SBO_3407"/>
<dbReference type="HOGENOM" id="CLU_006325_3_0_6"/>
<dbReference type="Proteomes" id="UP000007067">
    <property type="component" value="Chromosome"/>
</dbReference>
<dbReference type="GO" id="GO:0005524">
    <property type="term" value="F:ATP binding"/>
    <property type="evidence" value="ECO:0007669"/>
    <property type="project" value="UniProtKB-UniRule"/>
</dbReference>
<dbReference type="GO" id="GO:0003677">
    <property type="term" value="F:DNA binding"/>
    <property type="evidence" value="ECO:0007669"/>
    <property type="project" value="UniProtKB-KW"/>
</dbReference>
<dbReference type="GO" id="GO:0003700">
    <property type="term" value="F:DNA-binding transcription factor activity"/>
    <property type="evidence" value="ECO:0007669"/>
    <property type="project" value="UniProtKB-UniRule"/>
</dbReference>
<dbReference type="GO" id="GO:0045913">
    <property type="term" value="P:positive regulation of carbohydrate metabolic process"/>
    <property type="evidence" value="ECO:0007669"/>
    <property type="project" value="UniProtKB-UniRule"/>
</dbReference>
<dbReference type="GO" id="GO:0045893">
    <property type="term" value="P:positive regulation of DNA-templated transcription"/>
    <property type="evidence" value="ECO:0007669"/>
    <property type="project" value="UniProtKB-UniRule"/>
</dbReference>
<dbReference type="CDD" id="cd06170">
    <property type="entry name" value="LuxR_C_like"/>
    <property type="match status" value="1"/>
</dbReference>
<dbReference type="FunFam" id="1.10.10.10:FF:000115">
    <property type="entry name" value="HTH-type transcriptional regulator MalT"/>
    <property type="match status" value="1"/>
</dbReference>
<dbReference type="FunFam" id="1.25.40.10:FF:000086">
    <property type="entry name" value="HTH-type transcriptional regulator MalT"/>
    <property type="match status" value="1"/>
</dbReference>
<dbReference type="Gene3D" id="3.40.50.300">
    <property type="entry name" value="P-loop containing nucleotide triphosphate hydrolases"/>
    <property type="match status" value="1"/>
</dbReference>
<dbReference type="Gene3D" id="1.25.40.10">
    <property type="entry name" value="Tetratricopeptide repeat domain"/>
    <property type="match status" value="1"/>
</dbReference>
<dbReference type="Gene3D" id="1.10.10.10">
    <property type="entry name" value="Winged helix-like DNA-binding domain superfamily/Winged helix DNA-binding domain"/>
    <property type="match status" value="1"/>
</dbReference>
<dbReference type="HAMAP" id="MF_01247">
    <property type="entry name" value="HTH_type_MalT"/>
    <property type="match status" value="1"/>
</dbReference>
<dbReference type="InterPro" id="IPR027417">
    <property type="entry name" value="P-loop_NTPase"/>
</dbReference>
<dbReference type="InterPro" id="IPR016032">
    <property type="entry name" value="Sig_transdc_resp-reg_C-effctor"/>
</dbReference>
<dbReference type="InterPro" id="IPR011990">
    <property type="entry name" value="TPR-like_helical_dom_sf"/>
</dbReference>
<dbReference type="InterPro" id="IPR041617">
    <property type="entry name" value="TPR_MalT"/>
</dbReference>
<dbReference type="InterPro" id="IPR023768">
    <property type="entry name" value="Tscrpt_reg_HTH_MalT"/>
</dbReference>
<dbReference type="InterPro" id="IPR000792">
    <property type="entry name" value="Tscrpt_reg_LuxR_C"/>
</dbReference>
<dbReference type="InterPro" id="IPR036388">
    <property type="entry name" value="WH-like_DNA-bd_sf"/>
</dbReference>
<dbReference type="NCBIfam" id="NF003420">
    <property type="entry name" value="PRK04841.1"/>
    <property type="match status" value="1"/>
</dbReference>
<dbReference type="PANTHER" id="PTHR44688">
    <property type="entry name" value="DNA-BINDING TRANSCRIPTIONAL ACTIVATOR DEVR_DOSR"/>
    <property type="match status" value="1"/>
</dbReference>
<dbReference type="PANTHER" id="PTHR44688:SF16">
    <property type="entry name" value="DNA-BINDING TRANSCRIPTIONAL ACTIVATOR DEVR_DOSR"/>
    <property type="match status" value="1"/>
</dbReference>
<dbReference type="Pfam" id="PF00196">
    <property type="entry name" value="GerE"/>
    <property type="match status" value="1"/>
</dbReference>
<dbReference type="Pfam" id="PF17874">
    <property type="entry name" value="TPR_MalT"/>
    <property type="match status" value="1"/>
</dbReference>
<dbReference type="PRINTS" id="PR00038">
    <property type="entry name" value="HTHLUXR"/>
</dbReference>
<dbReference type="SMART" id="SM00421">
    <property type="entry name" value="HTH_LUXR"/>
    <property type="match status" value="1"/>
</dbReference>
<dbReference type="SUPFAM" id="SSF46894">
    <property type="entry name" value="C-terminal effector domain of the bipartite response regulators"/>
    <property type="match status" value="1"/>
</dbReference>
<dbReference type="SUPFAM" id="SSF52540">
    <property type="entry name" value="P-loop containing nucleoside triphosphate hydrolases"/>
    <property type="match status" value="1"/>
</dbReference>
<dbReference type="SUPFAM" id="SSF48452">
    <property type="entry name" value="TPR-like"/>
    <property type="match status" value="1"/>
</dbReference>
<dbReference type="PROSITE" id="PS00622">
    <property type="entry name" value="HTH_LUXR_1"/>
    <property type="match status" value="1"/>
</dbReference>
<dbReference type="PROSITE" id="PS50043">
    <property type="entry name" value="HTH_LUXR_2"/>
    <property type="match status" value="1"/>
</dbReference>
<protein>
    <recommendedName>
        <fullName evidence="1">HTH-type transcriptional regulator MalT</fullName>
    </recommendedName>
    <alternativeName>
        <fullName evidence="1">ATP-dependent transcriptional activator MalT</fullName>
    </alternativeName>
</protein>
<gene>
    <name evidence="1" type="primary">malT</name>
    <name type="ordered locus">SBO_3407</name>
</gene>
<organism>
    <name type="scientific">Shigella boydii serotype 4 (strain Sb227)</name>
    <dbReference type="NCBI Taxonomy" id="300268"/>
    <lineage>
        <taxon>Bacteria</taxon>
        <taxon>Pseudomonadati</taxon>
        <taxon>Pseudomonadota</taxon>
        <taxon>Gammaproteobacteria</taxon>
        <taxon>Enterobacterales</taxon>
        <taxon>Enterobacteriaceae</taxon>
        <taxon>Shigella</taxon>
    </lineage>
</organism>
<feature type="chain" id="PRO_1000085779" description="HTH-type transcriptional regulator MalT">
    <location>
        <begin position="1"/>
        <end position="901"/>
    </location>
</feature>
<feature type="domain" description="HTH luxR-type" evidence="1">
    <location>
        <begin position="829"/>
        <end position="894"/>
    </location>
</feature>
<feature type="DNA-binding region" description="H-T-H motif" evidence="1">
    <location>
        <begin position="853"/>
        <end position="872"/>
    </location>
</feature>
<feature type="binding site" evidence="1">
    <location>
        <begin position="39"/>
        <end position="46"/>
    </location>
    <ligand>
        <name>ATP</name>
        <dbReference type="ChEBI" id="CHEBI:30616"/>
    </ligand>
</feature>